<name>PDUL_PLAL2</name>
<protein>
    <recommendedName>
        <fullName>Phosphate propanoyltransferase</fullName>
        <ecNumber evidence="3">2.3.1.222</ecNumber>
    </recommendedName>
    <alternativeName>
        <fullName>Phosphate acyltransferase PduL</fullName>
    </alternativeName>
    <alternativeName>
        <fullName evidence="5">Phosphotransacylase PduL</fullName>
        <shortName evidence="5">PTAC</shortName>
    </alternativeName>
    <alternativeName>
        <fullName evidence="6">Propanediol utilization protein PduL</fullName>
    </alternativeName>
</protein>
<evidence type="ECO:0000250" key="1">
    <source>
        <dbReference type="UniProtKB" id="Q21A54"/>
    </source>
</evidence>
<evidence type="ECO:0000269" key="2">
    <source>
    </source>
</evidence>
<evidence type="ECO:0000269" key="3">
    <source>
    </source>
</evidence>
<evidence type="ECO:0000303" key="4">
    <source>
    </source>
</evidence>
<evidence type="ECO:0000303" key="5">
    <source>
    </source>
</evidence>
<evidence type="ECO:0000305" key="6"/>
<evidence type="ECO:0000305" key="7">
    <source>
    </source>
</evidence>
<reference key="1">
    <citation type="journal article" date="2010" name="Stand. Genomic Sci.">
        <title>Complete genome sequence of Planctomyces limnophilus type strain (Mu 290).</title>
        <authorList>
            <person name="Labutti K."/>
            <person name="Sikorski J."/>
            <person name="Schneider S."/>
            <person name="Nolan M."/>
            <person name="Lucas S."/>
            <person name="Glavina Del Rio T."/>
            <person name="Tice H."/>
            <person name="Cheng J.F."/>
            <person name="Goodwin L."/>
            <person name="Pitluck S."/>
            <person name="Liolios K."/>
            <person name="Ivanova N."/>
            <person name="Mavromatis K."/>
            <person name="Mikhailova N."/>
            <person name="Pati A."/>
            <person name="Chen A."/>
            <person name="Palaniappan K."/>
            <person name="Land M."/>
            <person name="Hauser L."/>
            <person name="Chang Y.J."/>
            <person name="Jeffries C.D."/>
            <person name="Tindall B.J."/>
            <person name="Rohde M."/>
            <person name="Goker M."/>
            <person name="Woyke T."/>
            <person name="Bristow J."/>
            <person name="Eisen J.A."/>
            <person name="Markowitz V."/>
            <person name="Hugenholtz P."/>
            <person name="Kyrpides N.C."/>
            <person name="Klenk H.P."/>
            <person name="Lapidus A."/>
        </authorList>
    </citation>
    <scope>NUCLEOTIDE SEQUENCE [LARGE SCALE GENOMIC DNA]</scope>
    <source>
        <strain>ATCC 43296 / DSM 3776 / IFAM 1008 / Mu 290</strain>
    </source>
</reference>
<reference key="2">
    <citation type="journal article" date="2014" name="Appl. Environ. Microbiol.">
        <title>Characterization of a planctomycetal organelle: a novel bacterial microcompartment for the aerobic degradation of plant saccharides.</title>
        <authorList>
            <person name="Erbilgin O."/>
            <person name="McDonald K.L."/>
            <person name="Kerfeld C.A."/>
        </authorList>
    </citation>
    <scope>IDENTIFICATION</scope>
    <scope>FUNCTION</scope>
</reference>
<reference key="3">
    <citation type="journal article" date="2016" name="PLoS Biol.">
        <title>The Structural Basis of Coenzyme A Recycling in a Bacterial Organelle.</title>
        <authorList>
            <person name="Erbilgin O."/>
            <person name="Sutter M."/>
            <person name="Kerfeld C.A."/>
        </authorList>
    </citation>
    <scope>FUNCTION</scope>
    <scope>CATALYTIC ACTIVITY</scope>
    <scope>SUBUNIT</scope>
    <source>
        <strain>ATCC 43296 / DSM 3776 / IFAM 1008 / Mu 290</strain>
    </source>
</reference>
<organism>
    <name type="scientific">Planctopirus limnophila (strain ATCC 43296 / DSM 3776 / IFAM 1008 / Mu 290)</name>
    <name type="common">Planctomyces limnophilus</name>
    <dbReference type="NCBI Taxonomy" id="521674"/>
    <lineage>
        <taxon>Bacteria</taxon>
        <taxon>Pseudomonadati</taxon>
        <taxon>Planctomycetota</taxon>
        <taxon>Planctomycetia</taxon>
        <taxon>Planctomycetales</taxon>
        <taxon>Planctomycetaceae</taxon>
        <taxon>Planctopirus</taxon>
    </lineage>
</organism>
<accession>D5SXM0</accession>
<feature type="chain" id="PRO_0000454244" description="Phosphate propanoyltransferase">
    <location>
        <begin position="1"/>
        <end position="244"/>
    </location>
</feature>
<feature type="binding site" evidence="1">
    <location>
        <begin position="52"/>
        <end position="54"/>
    </location>
    <ligand>
        <name>CoA</name>
        <dbReference type="ChEBI" id="CHEBI:57287"/>
    </ligand>
</feature>
<feature type="binding site" evidence="1">
    <location>
        <position position="56"/>
    </location>
    <ligand>
        <name>Zn(2+)</name>
        <dbReference type="ChEBI" id="CHEBI:29105"/>
        <label>1</label>
    </ligand>
</feature>
<feature type="binding site" evidence="1">
    <location>
        <position position="58"/>
    </location>
    <ligand>
        <name>Zn(2+)</name>
        <dbReference type="ChEBI" id="CHEBI:29105"/>
        <label>1</label>
    </ligand>
</feature>
<feature type="binding site" evidence="1">
    <location>
        <position position="106"/>
    </location>
    <ligand>
        <name>CoA</name>
        <dbReference type="ChEBI" id="CHEBI:57287"/>
    </ligand>
</feature>
<feature type="binding site" evidence="1">
    <location>
        <position position="112"/>
    </location>
    <ligand>
        <name>phosphate</name>
        <dbReference type="ChEBI" id="CHEBI:43474"/>
    </ligand>
</feature>
<feature type="binding site" evidence="1">
    <location>
        <position position="118"/>
    </location>
    <ligand>
        <name>Zn(2+)</name>
        <dbReference type="ChEBI" id="CHEBI:29105"/>
        <label>1</label>
    </ligand>
</feature>
<feature type="binding site" evidence="1">
    <location>
        <position position="166"/>
    </location>
    <ligand>
        <name>Zn(2+)</name>
        <dbReference type="ChEBI" id="CHEBI:29105"/>
        <label>2</label>
    </ligand>
</feature>
<feature type="binding site" evidence="1">
    <location>
        <position position="168"/>
    </location>
    <ligand>
        <name>Zn(2+)</name>
        <dbReference type="ChEBI" id="CHEBI:29105"/>
        <label>2</label>
    </ligand>
</feature>
<feature type="binding site" evidence="1">
    <location>
        <position position="214"/>
    </location>
    <ligand>
        <name>Zn(2+)</name>
        <dbReference type="ChEBI" id="CHEBI:29105"/>
        <label>2</label>
    </ligand>
</feature>
<feature type="binding site" evidence="1">
    <location>
        <position position="221"/>
    </location>
    <ligand>
        <name>CoA</name>
        <dbReference type="ChEBI" id="CHEBI:57287"/>
    </ligand>
</feature>
<sequence>MSSDSVVAGNISRADVERVVRAVLTRQLAGATTSSGSVSSAGGPPNPLVVNISARHVHLTEEHVEVLFGKGVKLEPMKWLYQDGYYAAKQTVTIFGPRRRMIPDVRVLGPCRNASQVELAFTDGISLGIDLPVRISGDHHDTVGCVLVGPAGVVELKSGVIRAMRHVHMSPADCAYYGVKNGDEMDLKIHSGPCTTTLEHVTVREDKDVKLEVHIDTDEGNAVDLSHATKVELVKPVGCGCHSK</sequence>
<proteinExistence type="evidence at protein level"/>
<comment type="function">
    <text evidence="2 7">Part of a bacterial microcompartment (BMC) locus required for growth on plant and algal sugars, including L-fucose and L-rhamnose (PubMed:24487526). Thought to be active on lactyl-CoA in a lactaldehyde-degradation pathway (Probable). CoA is regenerated within the BMC via this enzyme, although there must also be cofactor transport across the BMC. Directly targeted to the BMC (Probable).</text>
</comment>
<comment type="catalytic activity">
    <reaction evidence="3">
        <text>propanoyl-CoA + phosphate = propanoyl phosphate + CoA</text>
        <dbReference type="Rhea" id="RHEA:28046"/>
        <dbReference type="ChEBI" id="CHEBI:43474"/>
        <dbReference type="ChEBI" id="CHEBI:57287"/>
        <dbReference type="ChEBI" id="CHEBI:57392"/>
        <dbReference type="ChEBI" id="CHEBI:58933"/>
        <dbReference type="EC" id="2.3.1.222"/>
    </reaction>
</comment>
<comment type="cofactor">
    <cofactor evidence="1">
        <name>Zn(2+)</name>
        <dbReference type="ChEBI" id="CHEBI:29105"/>
    </cofactor>
    <text evidence="1">There are 2 Zn(2+) ions per monomer; Zn(2+) and CoA bind inbetween the 2 domains in each monomer.</text>
</comment>
<comment type="subunit">
    <text evidence="3">Full-length protein forms large oligomers. Possible homotrimer and monomer, when purified in the absence of the encapsulation peptide (EP, residues 1-20). The EP may influence oligomerization.</text>
</comment>
<comment type="subcellular location">
    <subcellularLocation>
        <location evidence="7">Bacterial microcompartment</location>
    </subcellularLocation>
</comment>
<comment type="domain">
    <text evidence="1">Formed by 2 beta-barrels, each is capped on both ends by short alpha-helices.</text>
</comment>
<comment type="similarity">
    <text evidence="7">Belongs to the PduL family.</text>
</comment>
<gene>
    <name evidence="5" type="primary">pduL</name>
    <name evidence="4" type="synonym">pvmB</name>
    <name type="ordered locus">Plim_1757</name>
</gene>
<keyword id="KW-0012">Acyltransferase</keyword>
<keyword id="KW-1283">Bacterial microcompartment</keyword>
<keyword id="KW-0479">Metal-binding</keyword>
<keyword id="KW-1185">Reference proteome</keyword>
<keyword id="KW-0808">Transferase</keyword>
<keyword id="KW-0862">Zinc</keyword>
<dbReference type="EC" id="2.3.1.222" evidence="3"/>
<dbReference type="EMBL" id="CP001744">
    <property type="protein sequence ID" value="ADG67587.1"/>
    <property type="molecule type" value="Genomic_DNA"/>
</dbReference>
<dbReference type="RefSeq" id="WP_013110018.1">
    <property type="nucleotide sequence ID" value="NC_014148.1"/>
</dbReference>
<dbReference type="SMR" id="D5SXM0"/>
<dbReference type="DIP" id="DIP-61926N"/>
<dbReference type="STRING" id="521674.Plim_1757"/>
<dbReference type="KEGG" id="plm:Plim_1757"/>
<dbReference type="eggNOG" id="COG4869">
    <property type="taxonomic scope" value="Bacteria"/>
</dbReference>
<dbReference type="HOGENOM" id="CLU_080676_0_1_0"/>
<dbReference type="OrthoDB" id="9784365at2"/>
<dbReference type="Proteomes" id="UP000002220">
    <property type="component" value="Chromosome"/>
</dbReference>
<dbReference type="GO" id="GO:0031469">
    <property type="term" value="C:bacterial microcompartment"/>
    <property type="evidence" value="ECO:0007669"/>
    <property type="project" value="UniProtKB-SubCell"/>
</dbReference>
<dbReference type="GO" id="GO:0016747">
    <property type="term" value="F:acyltransferase activity, transferring groups other than amino-acyl groups"/>
    <property type="evidence" value="ECO:0007669"/>
    <property type="project" value="InterPro"/>
</dbReference>
<dbReference type="GO" id="GO:0046872">
    <property type="term" value="F:metal ion binding"/>
    <property type="evidence" value="ECO:0007669"/>
    <property type="project" value="UniProtKB-KW"/>
</dbReference>
<dbReference type="InterPro" id="IPR008300">
    <property type="entry name" value="PTAC"/>
</dbReference>
<dbReference type="NCBIfam" id="NF011652">
    <property type="entry name" value="PRK15070.1"/>
    <property type="match status" value="1"/>
</dbReference>
<dbReference type="PANTHER" id="PTHR39453">
    <property type="entry name" value="PHOSPHATE PROPANOYLTRANSFERASE"/>
    <property type="match status" value="1"/>
</dbReference>
<dbReference type="PANTHER" id="PTHR39453:SF1">
    <property type="entry name" value="PHOSPHATE PROPANOYLTRANSFERASE"/>
    <property type="match status" value="1"/>
</dbReference>
<dbReference type="Pfam" id="PF06130">
    <property type="entry name" value="PTAC"/>
    <property type="match status" value="1"/>
</dbReference>
<dbReference type="PIRSF" id="PIRSF010130">
    <property type="entry name" value="PduL"/>
    <property type="match status" value="1"/>
</dbReference>